<feature type="chain" id="PRO_0000356146" description="Pentatricopeptide repeat-containing protein At3g59040">
    <location>
        <begin position="1"/>
        <end position="583"/>
    </location>
</feature>
<feature type="repeat" description="PPR 1">
    <location>
        <begin position="138"/>
        <end position="172"/>
    </location>
</feature>
<feature type="repeat" description="PPR 2">
    <location>
        <begin position="173"/>
        <end position="207"/>
    </location>
</feature>
<feature type="repeat" description="PPR 3">
    <location>
        <begin position="208"/>
        <end position="242"/>
    </location>
</feature>
<feature type="repeat" description="PPR 4">
    <location>
        <begin position="246"/>
        <end position="280"/>
    </location>
</feature>
<feature type="repeat" description="PPR 5">
    <location>
        <begin position="281"/>
        <end position="312"/>
    </location>
</feature>
<feature type="repeat" description="PPR 6">
    <location>
        <begin position="313"/>
        <end position="347"/>
    </location>
</feature>
<feature type="repeat" description="PPR 7">
    <location>
        <begin position="348"/>
        <end position="382"/>
    </location>
</feature>
<feature type="repeat" description="PPR 8">
    <location>
        <begin position="383"/>
        <end position="417"/>
    </location>
</feature>
<feature type="repeat" description="PPR 9">
    <location>
        <begin position="418"/>
        <end position="452"/>
    </location>
</feature>
<feature type="repeat" description="PPR 10">
    <location>
        <begin position="453"/>
        <end position="487"/>
    </location>
</feature>
<feature type="region of interest" description="Disordered" evidence="1">
    <location>
        <begin position="525"/>
        <end position="583"/>
    </location>
</feature>
<feature type="compositionally biased region" description="Acidic residues" evidence="1">
    <location>
        <begin position="528"/>
        <end position="556"/>
    </location>
</feature>
<feature type="compositionally biased region" description="Basic and acidic residues" evidence="1">
    <location>
        <begin position="557"/>
        <end position="566"/>
    </location>
</feature>
<protein>
    <recommendedName>
        <fullName>Pentatricopeptide repeat-containing protein At3g59040</fullName>
    </recommendedName>
</protein>
<sequence length="583" mass="66161">MSQAVIFKPFVSVPSSNHSQRKLQNNIINVGVKIQNRFRVVCMGMLAPRKFLQKRRKMEVFKDAADETDQKRWRGLMLEIESTGSAVPVLRQYKTDGDQGLPRDLVLGTLVRFKQLKKWNLVSEILEWLRYQNWWNFSEIDFLMLITAYGKLGNFNGAERVLSVLSKMGSTPNVISYTALMESYGRGGKCNNAEAIFRRMQSSGPEPSAITYQIILKTFVEGDKFKEAEEVFETLLDEKKSPLKPDQKMYHMMIYMYKKAGNYEKARKVFSSMVGKGVPQSTVTYNSLMSFETSYKEVSKIYDQMQRSDIQPDVVSYALLIKAYGRARREEEALSVFEEMLDAGVRPTHKAYNILLDAFAISGMVEQAKTVFKSMRRDRIFPDLWSYTTMLSAYVNASDMEGAEKFFKRIKVDGFEPNIVTYGTLIKGYAKANDVEKMMEVYEKMRLSGIKANQTILTTIMDASGRCKNFGSALGWYKEMESCGVPPDQKAKNVLLSLASTQDELEEAKELTGIRNETATIIARVYGSDDDEEGVEDISSESSDDEDEGDDDDDDARETVLYDKPQEGSLGYGSLQTEELVGL</sequence>
<name>PP287_ARATH</name>
<dbReference type="EMBL" id="AL163527">
    <property type="protein sequence ID" value="CAB86932.1"/>
    <property type="status" value="ALT_SEQ"/>
    <property type="molecule type" value="Genomic_DNA"/>
</dbReference>
<dbReference type="EMBL" id="CP002686">
    <property type="protein sequence ID" value="AEE79865.1"/>
    <property type="molecule type" value="Genomic_DNA"/>
</dbReference>
<dbReference type="EMBL" id="AY080770">
    <property type="status" value="NOT_ANNOTATED_CDS"/>
    <property type="molecule type" value="mRNA"/>
</dbReference>
<dbReference type="EMBL" id="BT000951">
    <property type="protein sequence ID" value="AAN41351.1"/>
    <property type="molecule type" value="mRNA"/>
</dbReference>
<dbReference type="PIR" id="T47786">
    <property type="entry name" value="T47786"/>
</dbReference>
<dbReference type="RefSeq" id="NP_191463.2">
    <molecule id="Q9LYT2-1"/>
    <property type="nucleotide sequence ID" value="NM_115766.4"/>
</dbReference>
<dbReference type="SMR" id="Q9LYT2"/>
<dbReference type="FunCoup" id="Q9LYT2">
    <property type="interactions" value="1275"/>
</dbReference>
<dbReference type="STRING" id="3702.Q9LYT2"/>
<dbReference type="PaxDb" id="3702-AT3G59040.2"/>
<dbReference type="ProteomicsDB" id="248963">
    <molecule id="Q9LYT2-1"/>
</dbReference>
<dbReference type="EnsemblPlants" id="AT3G59040.1">
    <molecule id="Q9LYT2-1"/>
    <property type="protein sequence ID" value="AT3G59040.1"/>
    <property type="gene ID" value="AT3G59040"/>
</dbReference>
<dbReference type="GeneID" id="825073"/>
<dbReference type="Gramene" id="AT3G59040.1">
    <molecule id="Q9LYT2-1"/>
    <property type="protein sequence ID" value="AT3G59040.1"/>
    <property type="gene ID" value="AT3G59040"/>
</dbReference>
<dbReference type="KEGG" id="ath:AT3G59040"/>
<dbReference type="Araport" id="AT3G59040"/>
<dbReference type="TAIR" id="AT3G59040">
    <property type="gene designation" value="PPR287"/>
</dbReference>
<dbReference type="eggNOG" id="KOG4197">
    <property type="taxonomic scope" value="Eukaryota"/>
</dbReference>
<dbReference type="HOGENOM" id="CLU_002706_49_15_1"/>
<dbReference type="InParanoid" id="Q9LYT2"/>
<dbReference type="OMA" id="NKKGYPP"/>
<dbReference type="OrthoDB" id="185373at2759"/>
<dbReference type="PhylomeDB" id="Q9LYT2"/>
<dbReference type="PRO" id="PR:Q9LYT2"/>
<dbReference type="Proteomes" id="UP000006548">
    <property type="component" value="Chromosome 3"/>
</dbReference>
<dbReference type="ExpressionAtlas" id="Q9LYT2">
    <property type="expression patterns" value="baseline and differential"/>
</dbReference>
<dbReference type="Gene3D" id="1.25.40.10">
    <property type="entry name" value="Tetratricopeptide repeat domain"/>
    <property type="match status" value="4"/>
</dbReference>
<dbReference type="InterPro" id="IPR002885">
    <property type="entry name" value="Pentatricopeptide_rpt"/>
</dbReference>
<dbReference type="InterPro" id="IPR011990">
    <property type="entry name" value="TPR-like_helical_dom_sf"/>
</dbReference>
<dbReference type="NCBIfam" id="TIGR00756">
    <property type="entry name" value="PPR"/>
    <property type="match status" value="7"/>
</dbReference>
<dbReference type="PANTHER" id="PTHR47447">
    <property type="entry name" value="OS03G0856100 PROTEIN"/>
    <property type="match status" value="1"/>
</dbReference>
<dbReference type="PANTHER" id="PTHR47447:SF21">
    <property type="entry name" value="PENTACOTRIPEPTIDE-REPEAT REGION OF PRORP DOMAIN-CONTAINING PROTEIN"/>
    <property type="match status" value="1"/>
</dbReference>
<dbReference type="Pfam" id="PF01535">
    <property type="entry name" value="PPR"/>
    <property type="match status" value="2"/>
</dbReference>
<dbReference type="Pfam" id="PF13041">
    <property type="entry name" value="PPR_2"/>
    <property type="match status" value="3"/>
</dbReference>
<dbReference type="Pfam" id="PF13812">
    <property type="entry name" value="PPR_3"/>
    <property type="match status" value="1"/>
</dbReference>
<dbReference type="SUPFAM" id="SSF81901">
    <property type="entry name" value="HCP-like"/>
    <property type="match status" value="1"/>
</dbReference>
<dbReference type="PROSITE" id="PS51375">
    <property type="entry name" value="PPR"/>
    <property type="match status" value="9"/>
</dbReference>
<proteinExistence type="evidence at transcript level"/>
<comment type="alternative products">
    <event type="alternative splicing"/>
    <isoform>
        <id>Q9LYT2-1</id>
        <name>1</name>
        <sequence type="displayed"/>
    </isoform>
    <text>A number of isoforms are produced. According to EST sequences.</text>
</comment>
<comment type="similarity">
    <text evidence="2">Belongs to the PPR family. P subfamily.</text>
</comment>
<comment type="sequence caution" evidence="2">
    <conflict type="frameshift">
        <sequence resource="EMBL" id="AY080770"/>
    </conflict>
</comment>
<comment type="sequence caution" evidence="2">
    <conflict type="erroneous gene model prediction">
        <sequence resource="EMBL-CDS" id="CAB86932"/>
    </conflict>
</comment>
<comment type="online information" name="Pentatricopeptide repeat proteins">
    <link uri="https://ppr.plantenergy.uwa.edu.au"/>
</comment>
<reference key="1">
    <citation type="journal article" date="2000" name="Nature">
        <title>Sequence and analysis of chromosome 3 of the plant Arabidopsis thaliana.</title>
        <authorList>
            <person name="Salanoubat M."/>
            <person name="Lemcke K."/>
            <person name="Rieger M."/>
            <person name="Ansorge W."/>
            <person name="Unseld M."/>
            <person name="Fartmann B."/>
            <person name="Valle G."/>
            <person name="Bloecker H."/>
            <person name="Perez-Alonso M."/>
            <person name="Obermaier B."/>
            <person name="Delseny M."/>
            <person name="Boutry M."/>
            <person name="Grivell L.A."/>
            <person name="Mache R."/>
            <person name="Puigdomenech P."/>
            <person name="De Simone V."/>
            <person name="Choisne N."/>
            <person name="Artiguenave F."/>
            <person name="Robert C."/>
            <person name="Brottier P."/>
            <person name="Wincker P."/>
            <person name="Cattolico L."/>
            <person name="Weissenbach J."/>
            <person name="Saurin W."/>
            <person name="Quetier F."/>
            <person name="Schaefer M."/>
            <person name="Mueller-Auer S."/>
            <person name="Gabel C."/>
            <person name="Fuchs M."/>
            <person name="Benes V."/>
            <person name="Wurmbach E."/>
            <person name="Drzonek H."/>
            <person name="Erfle H."/>
            <person name="Jordan N."/>
            <person name="Bangert S."/>
            <person name="Wiedelmann R."/>
            <person name="Kranz H."/>
            <person name="Voss H."/>
            <person name="Holland R."/>
            <person name="Brandt P."/>
            <person name="Nyakatura G."/>
            <person name="Vezzi A."/>
            <person name="D'Angelo M."/>
            <person name="Pallavicini A."/>
            <person name="Toppo S."/>
            <person name="Simionati B."/>
            <person name="Conrad A."/>
            <person name="Hornischer K."/>
            <person name="Kauer G."/>
            <person name="Loehnert T.-H."/>
            <person name="Nordsiek G."/>
            <person name="Reichelt J."/>
            <person name="Scharfe M."/>
            <person name="Schoen O."/>
            <person name="Bargues M."/>
            <person name="Terol J."/>
            <person name="Climent J."/>
            <person name="Navarro P."/>
            <person name="Collado C."/>
            <person name="Perez-Perez A."/>
            <person name="Ottenwaelder B."/>
            <person name="Duchemin D."/>
            <person name="Cooke R."/>
            <person name="Laudie M."/>
            <person name="Berger-Llauro C."/>
            <person name="Purnelle B."/>
            <person name="Masuy D."/>
            <person name="de Haan M."/>
            <person name="Maarse A.C."/>
            <person name="Alcaraz J.-P."/>
            <person name="Cottet A."/>
            <person name="Casacuberta E."/>
            <person name="Monfort A."/>
            <person name="Argiriou A."/>
            <person name="Flores M."/>
            <person name="Liguori R."/>
            <person name="Vitale D."/>
            <person name="Mannhaupt G."/>
            <person name="Haase D."/>
            <person name="Schoof H."/>
            <person name="Rudd S."/>
            <person name="Zaccaria P."/>
            <person name="Mewes H.-W."/>
            <person name="Mayer K.F.X."/>
            <person name="Kaul S."/>
            <person name="Town C.D."/>
            <person name="Koo H.L."/>
            <person name="Tallon L.J."/>
            <person name="Jenkins J."/>
            <person name="Rooney T."/>
            <person name="Rizzo M."/>
            <person name="Walts A."/>
            <person name="Utterback T."/>
            <person name="Fujii C.Y."/>
            <person name="Shea T.P."/>
            <person name="Creasy T.H."/>
            <person name="Haas B."/>
            <person name="Maiti R."/>
            <person name="Wu D."/>
            <person name="Peterson J."/>
            <person name="Van Aken S."/>
            <person name="Pai G."/>
            <person name="Militscher J."/>
            <person name="Sellers P."/>
            <person name="Gill J.E."/>
            <person name="Feldblyum T.V."/>
            <person name="Preuss D."/>
            <person name="Lin X."/>
            <person name="Nierman W.C."/>
            <person name="Salzberg S.L."/>
            <person name="White O."/>
            <person name="Venter J.C."/>
            <person name="Fraser C.M."/>
            <person name="Kaneko T."/>
            <person name="Nakamura Y."/>
            <person name="Sato S."/>
            <person name="Kato T."/>
            <person name="Asamizu E."/>
            <person name="Sasamoto S."/>
            <person name="Kimura T."/>
            <person name="Idesawa K."/>
            <person name="Kawashima K."/>
            <person name="Kishida Y."/>
            <person name="Kiyokawa C."/>
            <person name="Kohara M."/>
            <person name="Matsumoto M."/>
            <person name="Matsuno A."/>
            <person name="Muraki A."/>
            <person name="Nakayama S."/>
            <person name="Nakazaki N."/>
            <person name="Shinpo S."/>
            <person name="Takeuchi C."/>
            <person name="Wada T."/>
            <person name="Watanabe A."/>
            <person name="Yamada M."/>
            <person name="Yasuda M."/>
            <person name="Tabata S."/>
        </authorList>
    </citation>
    <scope>NUCLEOTIDE SEQUENCE [LARGE SCALE GENOMIC DNA]</scope>
    <source>
        <strain>cv. Columbia</strain>
    </source>
</reference>
<reference key="2">
    <citation type="journal article" date="2017" name="Plant J.">
        <title>Araport11: a complete reannotation of the Arabidopsis thaliana reference genome.</title>
        <authorList>
            <person name="Cheng C.Y."/>
            <person name="Krishnakumar V."/>
            <person name="Chan A.P."/>
            <person name="Thibaud-Nissen F."/>
            <person name="Schobel S."/>
            <person name="Town C.D."/>
        </authorList>
    </citation>
    <scope>GENOME REANNOTATION</scope>
    <source>
        <strain>cv. Columbia</strain>
    </source>
</reference>
<reference key="3">
    <citation type="journal article" date="2003" name="Science">
        <title>Empirical analysis of transcriptional activity in the Arabidopsis genome.</title>
        <authorList>
            <person name="Yamada K."/>
            <person name="Lim J."/>
            <person name="Dale J.M."/>
            <person name="Chen H."/>
            <person name="Shinn P."/>
            <person name="Palm C.J."/>
            <person name="Southwick A.M."/>
            <person name="Wu H.C."/>
            <person name="Kim C.J."/>
            <person name="Nguyen M."/>
            <person name="Pham P.K."/>
            <person name="Cheuk R.F."/>
            <person name="Karlin-Newmann G."/>
            <person name="Liu S.X."/>
            <person name="Lam B."/>
            <person name="Sakano H."/>
            <person name="Wu T."/>
            <person name="Yu G."/>
            <person name="Miranda M."/>
            <person name="Quach H.L."/>
            <person name="Tripp M."/>
            <person name="Chang C.H."/>
            <person name="Lee J.M."/>
            <person name="Toriumi M.J."/>
            <person name="Chan M.M."/>
            <person name="Tang C.C."/>
            <person name="Onodera C.S."/>
            <person name="Deng J.M."/>
            <person name="Akiyama K."/>
            <person name="Ansari Y."/>
            <person name="Arakawa T."/>
            <person name="Banh J."/>
            <person name="Banno F."/>
            <person name="Bowser L."/>
            <person name="Brooks S.Y."/>
            <person name="Carninci P."/>
            <person name="Chao Q."/>
            <person name="Choy N."/>
            <person name="Enju A."/>
            <person name="Goldsmith A.D."/>
            <person name="Gurjal M."/>
            <person name="Hansen N.F."/>
            <person name="Hayashizaki Y."/>
            <person name="Johnson-Hopson C."/>
            <person name="Hsuan V.W."/>
            <person name="Iida K."/>
            <person name="Karnes M."/>
            <person name="Khan S."/>
            <person name="Koesema E."/>
            <person name="Ishida J."/>
            <person name="Jiang P.X."/>
            <person name="Jones T."/>
            <person name="Kawai J."/>
            <person name="Kamiya A."/>
            <person name="Meyers C."/>
            <person name="Nakajima M."/>
            <person name="Narusaka M."/>
            <person name="Seki M."/>
            <person name="Sakurai T."/>
            <person name="Satou M."/>
            <person name="Tamse R."/>
            <person name="Vaysberg M."/>
            <person name="Wallender E.K."/>
            <person name="Wong C."/>
            <person name="Yamamura Y."/>
            <person name="Yuan S."/>
            <person name="Shinozaki K."/>
            <person name="Davis R.W."/>
            <person name="Theologis A."/>
            <person name="Ecker J.R."/>
        </authorList>
    </citation>
    <scope>NUCLEOTIDE SEQUENCE [LARGE SCALE MRNA]</scope>
    <scope>NUCLEOTIDE SEQUENCE [LARGE SCALE MRNA] OF 58-583</scope>
    <source>
        <strain>cv. Columbia</strain>
    </source>
</reference>
<reference key="4">
    <citation type="journal article" date="2004" name="Plant Cell">
        <title>Genome-wide analysis of Arabidopsis pentatricopeptide repeat proteins reveals their essential role in organelle biogenesis.</title>
        <authorList>
            <person name="Lurin C."/>
            <person name="Andres C."/>
            <person name="Aubourg S."/>
            <person name="Bellaoui M."/>
            <person name="Bitton F."/>
            <person name="Bruyere C."/>
            <person name="Caboche M."/>
            <person name="Debast C."/>
            <person name="Gualberto J."/>
            <person name="Hoffmann B."/>
            <person name="Lecharny A."/>
            <person name="Le Ret M."/>
            <person name="Martin-Magniette M.-L."/>
            <person name="Mireau H."/>
            <person name="Peeters N."/>
            <person name="Renou J.-P."/>
            <person name="Szurek B."/>
            <person name="Taconnat L."/>
            <person name="Small I."/>
        </authorList>
    </citation>
    <scope>GENE FAMILY</scope>
</reference>
<accession>Q9LYT2</accession>
<keyword id="KW-0025">Alternative splicing</keyword>
<keyword id="KW-1185">Reference proteome</keyword>
<keyword id="KW-0677">Repeat</keyword>
<evidence type="ECO:0000256" key="1">
    <source>
        <dbReference type="SAM" id="MobiDB-lite"/>
    </source>
</evidence>
<evidence type="ECO:0000305" key="2"/>
<organism>
    <name type="scientific">Arabidopsis thaliana</name>
    <name type="common">Mouse-ear cress</name>
    <dbReference type="NCBI Taxonomy" id="3702"/>
    <lineage>
        <taxon>Eukaryota</taxon>
        <taxon>Viridiplantae</taxon>
        <taxon>Streptophyta</taxon>
        <taxon>Embryophyta</taxon>
        <taxon>Tracheophyta</taxon>
        <taxon>Spermatophyta</taxon>
        <taxon>Magnoliopsida</taxon>
        <taxon>eudicotyledons</taxon>
        <taxon>Gunneridae</taxon>
        <taxon>Pentapetalae</taxon>
        <taxon>rosids</taxon>
        <taxon>malvids</taxon>
        <taxon>Brassicales</taxon>
        <taxon>Brassicaceae</taxon>
        <taxon>Camelineae</taxon>
        <taxon>Arabidopsis</taxon>
    </lineage>
</organism>
<gene>
    <name type="ordered locus">At3g59040</name>
    <name type="ORF">F17J16_90</name>
</gene>